<accession>C4L3F6</accession>
<gene>
    <name evidence="1" type="primary">folD</name>
    <name type="ordered locus">EAT1b_0522</name>
</gene>
<protein>
    <recommendedName>
        <fullName evidence="1">Bifunctional protein FolD</fullName>
    </recommendedName>
    <domain>
        <recommendedName>
            <fullName evidence="1">Methylenetetrahydrofolate dehydrogenase</fullName>
            <ecNumber evidence="1">1.5.1.5</ecNumber>
        </recommendedName>
    </domain>
    <domain>
        <recommendedName>
            <fullName evidence="1">Methenyltetrahydrofolate cyclohydrolase</fullName>
            <ecNumber evidence="1">3.5.4.9</ecNumber>
        </recommendedName>
    </domain>
</protein>
<organism>
    <name type="scientific">Exiguobacterium sp. (strain ATCC BAA-1283 / AT1b)</name>
    <dbReference type="NCBI Taxonomy" id="360911"/>
    <lineage>
        <taxon>Bacteria</taxon>
        <taxon>Bacillati</taxon>
        <taxon>Bacillota</taxon>
        <taxon>Bacilli</taxon>
        <taxon>Bacillales</taxon>
        <taxon>Bacillales Family XII. Incertae Sedis</taxon>
        <taxon>Exiguobacterium</taxon>
    </lineage>
</organism>
<name>FOLD_EXISA</name>
<dbReference type="EC" id="1.5.1.5" evidence="1"/>
<dbReference type="EC" id="3.5.4.9" evidence="1"/>
<dbReference type="EMBL" id="CP001615">
    <property type="protein sequence ID" value="ACQ69454.1"/>
    <property type="molecule type" value="Genomic_DNA"/>
</dbReference>
<dbReference type="RefSeq" id="WP_012726573.1">
    <property type="nucleotide sequence ID" value="NC_012673.1"/>
</dbReference>
<dbReference type="SMR" id="C4L3F6"/>
<dbReference type="STRING" id="360911.EAT1b_0522"/>
<dbReference type="KEGG" id="eat:EAT1b_0522"/>
<dbReference type="eggNOG" id="COG0190">
    <property type="taxonomic scope" value="Bacteria"/>
</dbReference>
<dbReference type="HOGENOM" id="CLU_034045_2_1_9"/>
<dbReference type="OrthoDB" id="9803580at2"/>
<dbReference type="UniPathway" id="UPA00193"/>
<dbReference type="Proteomes" id="UP000000716">
    <property type="component" value="Chromosome"/>
</dbReference>
<dbReference type="GO" id="GO:0005829">
    <property type="term" value="C:cytosol"/>
    <property type="evidence" value="ECO:0007669"/>
    <property type="project" value="TreeGrafter"/>
</dbReference>
<dbReference type="GO" id="GO:0004477">
    <property type="term" value="F:methenyltetrahydrofolate cyclohydrolase activity"/>
    <property type="evidence" value="ECO:0007669"/>
    <property type="project" value="UniProtKB-UniRule"/>
</dbReference>
<dbReference type="GO" id="GO:0004488">
    <property type="term" value="F:methylenetetrahydrofolate dehydrogenase (NADP+) activity"/>
    <property type="evidence" value="ECO:0007669"/>
    <property type="project" value="UniProtKB-UniRule"/>
</dbReference>
<dbReference type="GO" id="GO:0000105">
    <property type="term" value="P:L-histidine biosynthetic process"/>
    <property type="evidence" value="ECO:0007669"/>
    <property type="project" value="UniProtKB-KW"/>
</dbReference>
<dbReference type="GO" id="GO:0009086">
    <property type="term" value="P:methionine biosynthetic process"/>
    <property type="evidence" value="ECO:0007669"/>
    <property type="project" value="UniProtKB-KW"/>
</dbReference>
<dbReference type="GO" id="GO:0006164">
    <property type="term" value="P:purine nucleotide biosynthetic process"/>
    <property type="evidence" value="ECO:0007669"/>
    <property type="project" value="UniProtKB-KW"/>
</dbReference>
<dbReference type="GO" id="GO:0035999">
    <property type="term" value="P:tetrahydrofolate interconversion"/>
    <property type="evidence" value="ECO:0007669"/>
    <property type="project" value="UniProtKB-UniRule"/>
</dbReference>
<dbReference type="CDD" id="cd01080">
    <property type="entry name" value="NAD_bind_m-THF_DH_Cyclohyd"/>
    <property type="match status" value="1"/>
</dbReference>
<dbReference type="FunFam" id="3.40.50.720:FF:000094">
    <property type="entry name" value="Bifunctional protein FolD"/>
    <property type="match status" value="1"/>
</dbReference>
<dbReference type="FunFam" id="3.40.50.10860:FF:000005">
    <property type="entry name" value="C-1-tetrahydrofolate synthase, cytoplasmic, putative"/>
    <property type="match status" value="1"/>
</dbReference>
<dbReference type="Gene3D" id="3.40.50.10860">
    <property type="entry name" value="Leucine Dehydrogenase, chain A, domain 1"/>
    <property type="match status" value="1"/>
</dbReference>
<dbReference type="Gene3D" id="3.40.50.720">
    <property type="entry name" value="NAD(P)-binding Rossmann-like Domain"/>
    <property type="match status" value="1"/>
</dbReference>
<dbReference type="HAMAP" id="MF_01576">
    <property type="entry name" value="THF_DHG_CYH"/>
    <property type="match status" value="1"/>
</dbReference>
<dbReference type="InterPro" id="IPR046346">
    <property type="entry name" value="Aminoacid_DH-like_N_sf"/>
</dbReference>
<dbReference type="InterPro" id="IPR036291">
    <property type="entry name" value="NAD(P)-bd_dom_sf"/>
</dbReference>
<dbReference type="InterPro" id="IPR000672">
    <property type="entry name" value="THF_DH/CycHdrlase"/>
</dbReference>
<dbReference type="InterPro" id="IPR020630">
    <property type="entry name" value="THF_DH/CycHdrlase_cat_dom"/>
</dbReference>
<dbReference type="InterPro" id="IPR020867">
    <property type="entry name" value="THF_DH/CycHdrlase_CS"/>
</dbReference>
<dbReference type="InterPro" id="IPR020631">
    <property type="entry name" value="THF_DH/CycHdrlase_NAD-bd_dom"/>
</dbReference>
<dbReference type="NCBIfam" id="NF010783">
    <property type="entry name" value="PRK14186.1"/>
    <property type="match status" value="1"/>
</dbReference>
<dbReference type="PANTHER" id="PTHR48099:SF5">
    <property type="entry name" value="C-1-TETRAHYDROFOLATE SYNTHASE, CYTOPLASMIC"/>
    <property type="match status" value="1"/>
</dbReference>
<dbReference type="PANTHER" id="PTHR48099">
    <property type="entry name" value="C-1-TETRAHYDROFOLATE SYNTHASE, CYTOPLASMIC-RELATED"/>
    <property type="match status" value="1"/>
</dbReference>
<dbReference type="Pfam" id="PF00763">
    <property type="entry name" value="THF_DHG_CYH"/>
    <property type="match status" value="1"/>
</dbReference>
<dbReference type="Pfam" id="PF02882">
    <property type="entry name" value="THF_DHG_CYH_C"/>
    <property type="match status" value="1"/>
</dbReference>
<dbReference type="PRINTS" id="PR00085">
    <property type="entry name" value="THFDHDRGNASE"/>
</dbReference>
<dbReference type="SUPFAM" id="SSF53223">
    <property type="entry name" value="Aminoacid dehydrogenase-like, N-terminal domain"/>
    <property type="match status" value="1"/>
</dbReference>
<dbReference type="SUPFAM" id="SSF51735">
    <property type="entry name" value="NAD(P)-binding Rossmann-fold domains"/>
    <property type="match status" value="1"/>
</dbReference>
<dbReference type="PROSITE" id="PS00766">
    <property type="entry name" value="THF_DHG_CYH_1"/>
    <property type="match status" value="1"/>
</dbReference>
<dbReference type="PROSITE" id="PS00767">
    <property type="entry name" value="THF_DHG_CYH_2"/>
    <property type="match status" value="1"/>
</dbReference>
<proteinExistence type="inferred from homology"/>
<feature type="chain" id="PRO_1000215598" description="Bifunctional protein FolD">
    <location>
        <begin position="1"/>
        <end position="278"/>
    </location>
</feature>
<feature type="binding site" evidence="1">
    <location>
        <begin position="163"/>
        <end position="165"/>
    </location>
    <ligand>
        <name>NADP(+)</name>
        <dbReference type="ChEBI" id="CHEBI:58349"/>
    </ligand>
</feature>
<feature type="binding site" evidence="1">
    <location>
        <position position="188"/>
    </location>
    <ligand>
        <name>NADP(+)</name>
        <dbReference type="ChEBI" id="CHEBI:58349"/>
    </ligand>
</feature>
<feature type="binding site" evidence="1">
    <location>
        <position position="229"/>
    </location>
    <ligand>
        <name>NADP(+)</name>
        <dbReference type="ChEBI" id="CHEBI:58349"/>
    </ligand>
</feature>
<comment type="function">
    <text evidence="1">Catalyzes the oxidation of 5,10-methylenetetrahydrofolate to 5,10-methenyltetrahydrofolate and then the hydrolysis of 5,10-methenyltetrahydrofolate to 10-formyltetrahydrofolate.</text>
</comment>
<comment type="catalytic activity">
    <reaction evidence="1">
        <text>(6R)-5,10-methylene-5,6,7,8-tetrahydrofolate + NADP(+) = (6R)-5,10-methenyltetrahydrofolate + NADPH</text>
        <dbReference type="Rhea" id="RHEA:22812"/>
        <dbReference type="ChEBI" id="CHEBI:15636"/>
        <dbReference type="ChEBI" id="CHEBI:57455"/>
        <dbReference type="ChEBI" id="CHEBI:57783"/>
        <dbReference type="ChEBI" id="CHEBI:58349"/>
        <dbReference type="EC" id="1.5.1.5"/>
    </reaction>
</comment>
<comment type="catalytic activity">
    <reaction evidence="1">
        <text>(6R)-5,10-methenyltetrahydrofolate + H2O = (6R)-10-formyltetrahydrofolate + H(+)</text>
        <dbReference type="Rhea" id="RHEA:23700"/>
        <dbReference type="ChEBI" id="CHEBI:15377"/>
        <dbReference type="ChEBI" id="CHEBI:15378"/>
        <dbReference type="ChEBI" id="CHEBI:57455"/>
        <dbReference type="ChEBI" id="CHEBI:195366"/>
        <dbReference type="EC" id="3.5.4.9"/>
    </reaction>
</comment>
<comment type="pathway">
    <text evidence="1">One-carbon metabolism; tetrahydrofolate interconversion.</text>
</comment>
<comment type="subunit">
    <text evidence="1">Homodimer.</text>
</comment>
<comment type="similarity">
    <text evidence="1">Belongs to the tetrahydrofolate dehydrogenase/cyclohydrolase family.</text>
</comment>
<reference key="1">
    <citation type="journal article" date="2011" name="J. Bacteriol.">
        <title>Complete genome sequence of the Thermophilic Bacterium Exiguobacterium sp. AT1b.</title>
        <authorList>
            <person name="Vishnivetskaya T.A."/>
            <person name="Lucas S."/>
            <person name="Copeland A."/>
            <person name="Lapidus A."/>
            <person name="Glavina del Rio T."/>
            <person name="Dalin E."/>
            <person name="Tice H."/>
            <person name="Bruce D.C."/>
            <person name="Goodwin L.A."/>
            <person name="Pitluck S."/>
            <person name="Saunders E."/>
            <person name="Brettin T."/>
            <person name="Detter C."/>
            <person name="Han C."/>
            <person name="Larimer F."/>
            <person name="Land M.L."/>
            <person name="Hauser L.J."/>
            <person name="Kyrpides N.C."/>
            <person name="Ovchinnikova G."/>
            <person name="Kathariou S."/>
            <person name="Ramaley R.F."/>
            <person name="Rodrigues D.F."/>
            <person name="Hendrix C."/>
            <person name="Richardson P."/>
            <person name="Tiedje J.M."/>
        </authorList>
    </citation>
    <scope>NUCLEOTIDE SEQUENCE [LARGE SCALE GENOMIC DNA]</scope>
    <source>
        <strain>ATCC BAA-1283 / AT1b</strain>
    </source>
</reference>
<sequence>MAVVIDGKQVAASYRETLKERVAELRARGIVPKLKVVLIGDDPASHSYVRGKERAAEEIGIDSQVLRFDETISEKELLDLIDLMNADEEVHGILVQLPLPKHIDESRVIMRISPEKDVDGFHPENVGKMMLGLDTLLPCTPHGILHLAKTQTEIAGKHVVVVGRSQIVGKPVGMLFLNESATVTYCHSKTADLGEMTRQADILIVAVGRAGLVTSDMVKPGALVIDVGVNRVEGRLVGDVDYEAVKEKASAITPVPGGVGPMTITMLMHNTVEVASRG</sequence>
<evidence type="ECO:0000255" key="1">
    <source>
        <dbReference type="HAMAP-Rule" id="MF_01576"/>
    </source>
</evidence>
<keyword id="KW-0028">Amino-acid biosynthesis</keyword>
<keyword id="KW-0368">Histidine biosynthesis</keyword>
<keyword id="KW-0378">Hydrolase</keyword>
<keyword id="KW-0486">Methionine biosynthesis</keyword>
<keyword id="KW-0511">Multifunctional enzyme</keyword>
<keyword id="KW-0521">NADP</keyword>
<keyword id="KW-0554">One-carbon metabolism</keyword>
<keyword id="KW-0560">Oxidoreductase</keyword>
<keyword id="KW-0658">Purine biosynthesis</keyword>